<organism>
    <name type="scientific">Nitratiruptor sp. (strain SB155-2)</name>
    <dbReference type="NCBI Taxonomy" id="387092"/>
    <lineage>
        <taxon>Bacteria</taxon>
        <taxon>Pseudomonadati</taxon>
        <taxon>Campylobacterota</taxon>
        <taxon>Epsilonproteobacteria</taxon>
        <taxon>Nautiliales</taxon>
        <taxon>Nitratiruptoraceae</taxon>
        <taxon>Nitratiruptor</taxon>
    </lineage>
</organism>
<keyword id="KW-0488">Methylation</keyword>
<keyword id="KW-1185">Reference proteome</keyword>
<keyword id="KW-0687">Ribonucleoprotein</keyword>
<keyword id="KW-0689">Ribosomal protein</keyword>
<keyword id="KW-0694">RNA-binding</keyword>
<keyword id="KW-0699">rRNA-binding</keyword>
<keyword id="KW-0820">tRNA-binding</keyword>
<evidence type="ECO:0000250" key="1"/>
<evidence type="ECO:0000255" key="2">
    <source>
        <dbReference type="HAMAP-Rule" id="MF_00403"/>
    </source>
</evidence>
<evidence type="ECO:0000305" key="3"/>
<reference key="1">
    <citation type="journal article" date="2007" name="Proc. Natl. Acad. Sci. U.S.A.">
        <title>Deep-sea vent epsilon-proteobacterial genomes provide insights into emergence of pathogens.</title>
        <authorList>
            <person name="Nakagawa S."/>
            <person name="Takaki Y."/>
            <person name="Shimamura S."/>
            <person name="Reysenbach A.-L."/>
            <person name="Takai K."/>
            <person name="Horikoshi K."/>
        </authorList>
    </citation>
    <scope>NUCLEOTIDE SEQUENCE [LARGE SCALE GENOMIC DNA]</scope>
    <source>
        <strain>SB155-2</strain>
    </source>
</reference>
<gene>
    <name evidence="2" type="primary">rpsL</name>
    <name type="ordered locus">NIS_0270</name>
</gene>
<accession>A6Q1M5</accession>
<feature type="chain" id="PRO_1000049797" description="Small ribosomal subunit protein uS12">
    <location>
        <begin position="1"/>
        <end position="124"/>
    </location>
</feature>
<feature type="modified residue" description="3-methylthioaspartic acid" evidence="1">
    <location>
        <position position="89"/>
    </location>
</feature>
<dbReference type="EMBL" id="AP009178">
    <property type="protein sequence ID" value="BAF69384.1"/>
    <property type="molecule type" value="Genomic_DNA"/>
</dbReference>
<dbReference type="RefSeq" id="WP_012081647.1">
    <property type="nucleotide sequence ID" value="NC_009662.1"/>
</dbReference>
<dbReference type="SMR" id="A6Q1M5"/>
<dbReference type="FunCoup" id="A6Q1M5">
    <property type="interactions" value="453"/>
</dbReference>
<dbReference type="STRING" id="387092.NIS_0270"/>
<dbReference type="KEGG" id="nis:NIS_0270"/>
<dbReference type="eggNOG" id="COG0048">
    <property type="taxonomic scope" value="Bacteria"/>
</dbReference>
<dbReference type="HOGENOM" id="CLU_104295_1_2_7"/>
<dbReference type="InParanoid" id="A6Q1M5"/>
<dbReference type="OrthoDB" id="9802366at2"/>
<dbReference type="Proteomes" id="UP000001118">
    <property type="component" value="Chromosome"/>
</dbReference>
<dbReference type="GO" id="GO:0015935">
    <property type="term" value="C:small ribosomal subunit"/>
    <property type="evidence" value="ECO:0007669"/>
    <property type="project" value="InterPro"/>
</dbReference>
<dbReference type="GO" id="GO:0019843">
    <property type="term" value="F:rRNA binding"/>
    <property type="evidence" value="ECO:0007669"/>
    <property type="project" value="UniProtKB-UniRule"/>
</dbReference>
<dbReference type="GO" id="GO:0003735">
    <property type="term" value="F:structural constituent of ribosome"/>
    <property type="evidence" value="ECO:0007669"/>
    <property type="project" value="InterPro"/>
</dbReference>
<dbReference type="GO" id="GO:0000049">
    <property type="term" value="F:tRNA binding"/>
    <property type="evidence" value="ECO:0007669"/>
    <property type="project" value="UniProtKB-UniRule"/>
</dbReference>
<dbReference type="GO" id="GO:0006412">
    <property type="term" value="P:translation"/>
    <property type="evidence" value="ECO:0007669"/>
    <property type="project" value="UniProtKB-UniRule"/>
</dbReference>
<dbReference type="CDD" id="cd03368">
    <property type="entry name" value="Ribosomal_S12"/>
    <property type="match status" value="1"/>
</dbReference>
<dbReference type="FunFam" id="2.40.50.140:FF:000001">
    <property type="entry name" value="30S ribosomal protein S12"/>
    <property type="match status" value="1"/>
</dbReference>
<dbReference type="Gene3D" id="2.40.50.140">
    <property type="entry name" value="Nucleic acid-binding proteins"/>
    <property type="match status" value="1"/>
</dbReference>
<dbReference type="HAMAP" id="MF_00403_B">
    <property type="entry name" value="Ribosomal_uS12_B"/>
    <property type="match status" value="1"/>
</dbReference>
<dbReference type="InterPro" id="IPR012340">
    <property type="entry name" value="NA-bd_OB-fold"/>
</dbReference>
<dbReference type="InterPro" id="IPR006032">
    <property type="entry name" value="Ribosomal_uS12"/>
</dbReference>
<dbReference type="InterPro" id="IPR005679">
    <property type="entry name" value="Ribosomal_uS12_bac"/>
</dbReference>
<dbReference type="NCBIfam" id="TIGR00981">
    <property type="entry name" value="rpsL_bact"/>
    <property type="match status" value="1"/>
</dbReference>
<dbReference type="PANTHER" id="PTHR11652">
    <property type="entry name" value="30S RIBOSOMAL PROTEIN S12 FAMILY MEMBER"/>
    <property type="match status" value="1"/>
</dbReference>
<dbReference type="Pfam" id="PF00164">
    <property type="entry name" value="Ribosom_S12_S23"/>
    <property type="match status" value="1"/>
</dbReference>
<dbReference type="PIRSF" id="PIRSF002133">
    <property type="entry name" value="Ribosomal_S12/S23"/>
    <property type="match status" value="1"/>
</dbReference>
<dbReference type="PRINTS" id="PR01034">
    <property type="entry name" value="RIBOSOMALS12"/>
</dbReference>
<dbReference type="SUPFAM" id="SSF50249">
    <property type="entry name" value="Nucleic acid-binding proteins"/>
    <property type="match status" value="1"/>
</dbReference>
<dbReference type="PROSITE" id="PS00055">
    <property type="entry name" value="RIBOSOMAL_S12"/>
    <property type="match status" value="1"/>
</dbReference>
<proteinExistence type="inferred from homology"/>
<protein>
    <recommendedName>
        <fullName evidence="2">Small ribosomal subunit protein uS12</fullName>
    </recommendedName>
    <alternativeName>
        <fullName evidence="3">30S ribosomal protein S12</fullName>
    </alternativeName>
</protein>
<name>RS12_NITSB</name>
<sequence length="124" mass="13832">MPTINQLVRKERKKVIKKSKSPALVKCPQRRGVCTRVYTTTPKKPNSALRKVAKVRLTSGYEVISYIPGEGHNLQEHSIVLVRGGRVKDLPGVKYHIIRGALDTAGVANRKKSRSKYGTKKPKS</sequence>
<comment type="function">
    <text evidence="2">With S4 and S5 plays an important role in translational accuracy.</text>
</comment>
<comment type="function">
    <text evidence="2">Interacts with and stabilizes bases of the 16S rRNA that are involved in tRNA selection in the A site and with the mRNA backbone. Located at the interface of the 30S and 50S subunits, it traverses the body of the 30S subunit contacting proteins on the other side and probably holding the rRNA structure together. The combined cluster of proteins S8, S12 and S17 appears to hold together the shoulder and platform of the 30S subunit.</text>
</comment>
<comment type="subunit">
    <text evidence="2">Part of the 30S ribosomal subunit. Contacts proteins S8 and S17. May interact with IF1 in the 30S initiation complex.</text>
</comment>
<comment type="similarity">
    <text evidence="2">Belongs to the universal ribosomal protein uS12 family.</text>
</comment>